<proteinExistence type="inferred from homology"/>
<comment type="function">
    <text evidence="1">Part of the Sec protein translocase complex. Interacts with the SecYEG preprotein conducting channel. Has a central role in coupling the hydrolysis of ATP to the transfer of proteins into and across the cell membrane, serving both as a receptor for the preprotein-SecB complex and as an ATP-driven molecular motor driving the stepwise translocation of polypeptide chains across the membrane.</text>
</comment>
<comment type="catalytic activity">
    <reaction evidence="1">
        <text>ATP + H2O + cellular proteinSide 1 = ADP + phosphate + cellular proteinSide 2.</text>
        <dbReference type="EC" id="7.4.2.8"/>
    </reaction>
</comment>
<comment type="cofactor">
    <cofactor evidence="1">
        <name>Zn(2+)</name>
        <dbReference type="ChEBI" id="CHEBI:29105"/>
    </cofactor>
    <text evidence="1">May bind 1 zinc ion per subunit.</text>
</comment>
<comment type="subunit">
    <text evidence="1">Monomer and homodimer. Part of the essential Sec protein translocation apparatus which comprises SecA, SecYEG and auxiliary proteins SecDF-YajC and YidC.</text>
</comment>
<comment type="subcellular location">
    <subcellularLocation>
        <location evidence="1">Cell inner membrane</location>
        <topology evidence="1">Peripheral membrane protein</topology>
        <orientation evidence="1">Cytoplasmic side</orientation>
    </subcellularLocation>
    <subcellularLocation>
        <location evidence="1">Cytoplasm</location>
    </subcellularLocation>
    <text evidence="1">Distribution is 50-50.</text>
</comment>
<comment type="similarity">
    <text evidence="1">Belongs to the SecA family.</text>
</comment>
<feature type="chain" id="PRO_0000320758" description="Protein translocase subunit SecA">
    <location>
        <begin position="1"/>
        <end position="930"/>
    </location>
</feature>
<feature type="binding site" evidence="1">
    <location>
        <position position="87"/>
    </location>
    <ligand>
        <name>ATP</name>
        <dbReference type="ChEBI" id="CHEBI:30616"/>
    </ligand>
</feature>
<feature type="binding site" evidence="1">
    <location>
        <begin position="105"/>
        <end position="109"/>
    </location>
    <ligand>
        <name>ATP</name>
        <dbReference type="ChEBI" id="CHEBI:30616"/>
    </ligand>
</feature>
<feature type="binding site" evidence="1">
    <location>
        <position position="515"/>
    </location>
    <ligand>
        <name>ATP</name>
        <dbReference type="ChEBI" id="CHEBI:30616"/>
    </ligand>
</feature>
<feature type="binding site" evidence="1">
    <location>
        <position position="914"/>
    </location>
    <ligand>
        <name>Zn(2+)</name>
        <dbReference type="ChEBI" id="CHEBI:29105"/>
    </ligand>
</feature>
<feature type="binding site" evidence="1">
    <location>
        <position position="916"/>
    </location>
    <ligand>
        <name>Zn(2+)</name>
        <dbReference type="ChEBI" id="CHEBI:29105"/>
    </ligand>
</feature>
<feature type="binding site" evidence="1">
    <location>
        <position position="925"/>
    </location>
    <ligand>
        <name>Zn(2+)</name>
        <dbReference type="ChEBI" id="CHEBI:29105"/>
    </ligand>
</feature>
<feature type="binding site" evidence="1">
    <location>
        <position position="926"/>
    </location>
    <ligand>
        <name>Zn(2+)</name>
        <dbReference type="ChEBI" id="CHEBI:29105"/>
    </ligand>
</feature>
<evidence type="ECO:0000255" key="1">
    <source>
        <dbReference type="HAMAP-Rule" id="MF_01382"/>
    </source>
</evidence>
<sequence>MTTGFLQKIFGSRNQRLVKQYQKTVAAINALEPQIEKLTDDQLRGKTDEFRQRIAAGESLDKLLPEAFAVCREASRRVLKMRHFDVQLIGGMVLHYGKIAEMRTGEGKTLVATLPVYLNALAGRGVHVVTVNDYLAQRDAEWMARLYNFLGLSVGINLSGMEHDQKQQAYAADITYGTNNEFGFDYLRDNMVYETDARVQRALNFAVVDEVDSILIDEARTPLIISGQAEDHTELYVRMNALPPLLERQIGEEKADGTGVEKPGDYTLDEKSRQVFLTESGHEKAERLLAEWGLIGEGESLYAPQNITLMHHVYAALRAHTLFHKDQHYVVQNGEVVIVDEFTGRLMAGRRWSDGLHQAVEAKEHVKIQSENQTLASITFQNYFRMYAKLAGMTGTADTEAYEFNEIYGLETVVIPTNRPPKRIDKQDQIYKTAKERYDAVIRDIRECYERGQPVLVGTTSIENSELLSHLLTQAGLPHEVLNAKQHEREAAIVAEAGRPKRITIATNMAGRGTDIVLGGNAEKQAAFLEADDSIPPDEKARRIKQLHDEWETLHEQVKAAGGLHIIGTERHESRRIDNQLRGRAGRQGDPGSSRFYLSLDDPLLRIFAGDRVRSIMDRLKMPEGEAIEAGIVTRSIESAQRKVEARNFDIRKQLLEYDDVSNDQRKVIYQQRNELLEAHDITETISAMRHGVITEVVHQFVPAGSIEEQWDVPELEEVLRNDWQLDLAIQEMVNESSSITAEEILEAVTSAADEQYEAKVAMVGRESFSAFERSVMLQTVDRLWREHLAALDHLRQGIHLRGYAQKNPKQEYKREAFELFAAMLDAIKQEVTRIVMNVQVQSPEQLEEAAEQIEEQGGHLENVEFQHADYAESGAPVANVAVAAAATADMVGSAMTHGGAGGEMPKVGRNDPCPCGSGKKYKQCHGKLS</sequence>
<organism>
    <name type="scientific">Burkholderia vietnamiensis (strain G4 / LMG 22486)</name>
    <name type="common">Burkholderia cepacia (strain R1808)</name>
    <dbReference type="NCBI Taxonomy" id="269482"/>
    <lineage>
        <taxon>Bacteria</taxon>
        <taxon>Pseudomonadati</taxon>
        <taxon>Pseudomonadota</taxon>
        <taxon>Betaproteobacteria</taxon>
        <taxon>Burkholderiales</taxon>
        <taxon>Burkholderiaceae</taxon>
        <taxon>Burkholderia</taxon>
        <taxon>Burkholderia cepacia complex</taxon>
    </lineage>
</organism>
<protein>
    <recommendedName>
        <fullName evidence="1">Protein translocase subunit SecA</fullName>
        <ecNumber evidence="1">7.4.2.8</ecNumber>
    </recommendedName>
</protein>
<dbReference type="EC" id="7.4.2.8" evidence="1"/>
<dbReference type="EMBL" id="CP000614">
    <property type="protein sequence ID" value="ABO53556.1"/>
    <property type="molecule type" value="Genomic_DNA"/>
</dbReference>
<dbReference type="SMR" id="A4JBA3"/>
<dbReference type="KEGG" id="bvi:Bcep1808_0544"/>
<dbReference type="eggNOG" id="COG0653">
    <property type="taxonomic scope" value="Bacteria"/>
</dbReference>
<dbReference type="HOGENOM" id="CLU_005314_3_0_4"/>
<dbReference type="Proteomes" id="UP000002287">
    <property type="component" value="Chromosome 1"/>
</dbReference>
<dbReference type="GO" id="GO:0031522">
    <property type="term" value="C:cell envelope Sec protein transport complex"/>
    <property type="evidence" value="ECO:0007669"/>
    <property type="project" value="TreeGrafter"/>
</dbReference>
<dbReference type="GO" id="GO:0005829">
    <property type="term" value="C:cytosol"/>
    <property type="evidence" value="ECO:0007669"/>
    <property type="project" value="TreeGrafter"/>
</dbReference>
<dbReference type="GO" id="GO:0005886">
    <property type="term" value="C:plasma membrane"/>
    <property type="evidence" value="ECO:0007669"/>
    <property type="project" value="UniProtKB-SubCell"/>
</dbReference>
<dbReference type="GO" id="GO:0005524">
    <property type="term" value="F:ATP binding"/>
    <property type="evidence" value="ECO:0007669"/>
    <property type="project" value="UniProtKB-UniRule"/>
</dbReference>
<dbReference type="GO" id="GO:0046872">
    <property type="term" value="F:metal ion binding"/>
    <property type="evidence" value="ECO:0007669"/>
    <property type="project" value="UniProtKB-KW"/>
</dbReference>
<dbReference type="GO" id="GO:0008564">
    <property type="term" value="F:protein-exporting ATPase activity"/>
    <property type="evidence" value="ECO:0007669"/>
    <property type="project" value="UniProtKB-EC"/>
</dbReference>
<dbReference type="GO" id="GO:0065002">
    <property type="term" value="P:intracellular protein transmembrane transport"/>
    <property type="evidence" value="ECO:0007669"/>
    <property type="project" value="UniProtKB-UniRule"/>
</dbReference>
<dbReference type="GO" id="GO:0017038">
    <property type="term" value="P:protein import"/>
    <property type="evidence" value="ECO:0007669"/>
    <property type="project" value="InterPro"/>
</dbReference>
<dbReference type="GO" id="GO:0006605">
    <property type="term" value="P:protein targeting"/>
    <property type="evidence" value="ECO:0007669"/>
    <property type="project" value="UniProtKB-UniRule"/>
</dbReference>
<dbReference type="GO" id="GO:0043952">
    <property type="term" value="P:protein transport by the Sec complex"/>
    <property type="evidence" value="ECO:0007669"/>
    <property type="project" value="TreeGrafter"/>
</dbReference>
<dbReference type="CDD" id="cd17928">
    <property type="entry name" value="DEXDc_SecA"/>
    <property type="match status" value="1"/>
</dbReference>
<dbReference type="CDD" id="cd18803">
    <property type="entry name" value="SF2_C_secA"/>
    <property type="match status" value="1"/>
</dbReference>
<dbReference type="FunFam" id="3.40.50.300:FF:000081">
    <property type="entry name" value="Preprotein translocase subunit SecA"/>
    <property type="match status" value="1"/>
</dbReference>
<dbReference type="FunFam" id="3.40.50.300:FF:000113">
    <property type="entry name" value="Preprotein translocase subunit SecA"/>
    <property type="match status" value="1"/>
</dbReference>
<dbReference type="FunFam" id="3.90.1440.10:FF:000001">
    <property type="entry name" value="Preprotein translocase subunit SecA"/>
    <property type="match status" value="1"/>
</dbReference>
<dbReference type="FunFam" id="1.10.3060.10:FF:000003">
    <property type="entry name" value="Protein translocase subunit SecA"/>
    <property type="match status" value="1"/>
</dbReference>
<dbReference type="Gene3D" id="1.10.3060.10">
    <property type="entry name" value="Helical scaffold and wing domains of SecA"/>
    <property type="match status" value="1"/>
</dbReference>
<dbReference type="Gene3D" id="3.40.50.300">
    <property type="entry name" value="P-loop containing nucleotide triphosphate hydrolases"/>
    <property type="match status" value="2"/>
</dbReference>
<dbReference type="Gene3D" id="3.90.1440.10">
    <property type="entry name" value="SecA, preprotein cross-linking domain"/>
    <property type="match status" value="1"/>
</dbReference>
<dbReference type="HAMAP" id="MF_01382">
    <property type="entry name" value="SecA"/>
    <property type="match status" value="1"/>
</dbReference>
<dbReference type="InterPro" id="IPR014001">
    <property type="entry name" value="Helicase_ATP-bd"/>
</dbReference>
<dbReference type="InterPro" id="IPR001650">
    <property type="entry name" value="Helicase_C-like"/>
</dbReference>
<dbReference type="InterPro" id="IPR027417">
    <property type="entry name" value="P-loop_NTPase"/>
</dbReference>
<dbReference type="InterPro" id="IPR004027">
    <property type="entry name" value="SEC_C_motif"/>
</dbReference>
<dbReference type="InterPro" id="IPR000185">
    <property type="entry name" value="SecA"/>
</dbReference>
<dbReference type="InterPro" id="IPR020937">
    <property type="entry name" value="SecA_CS"/>
</dbReference>
<dbReference type="InterPro" id="IPR011115">
    <property type="entry name" value="SecA_DEAD"/>
</dbReference>
<dbReference type="InterPro" id="IPR014018">
    <property type="entry name" value="SecA_motor_DEAD"/>
</dbReference>
<dbReference type="InterPro" id="IPR011130">
    <property type="entry name" value="SecA_preprotein_X-link_dom"/>
</dbReference>
<dbReference type="InterPro" id="IPR044722">
    <property type="entry name" value="SecA_SF2_C"/>
</dbReference>
<dbReference type="InterPro" id="IPR011116">
    <property type="entry name" value="SecA_Wing/Scaffold"/>
</dbReference>
<dbReference type="InterPro" id="IPR036266">
    <property type="entry name" value="SecA_Wing/Scaffold_sf"/>
</dbReference>
<dbReference type="InterPro" id="IPR036670">
    <property type="entry name" value="SecA_X-link_sf"/>
</dbReference>
<dbReference type="NCBIfam" id="NF009538">
    <property type="entry name" value="PRK12904.1"/>
    <property type="match status" value="1"/>
</dbReference>
<dbReference type="NCBIfam" id="TIGR00963">
    <property type="entry name" value="secA"/>
    <property type="match status" value="1"/>
</dbReference>
<dbReference type="PANTHER" id="PTHR30612:SF0">
    <property type="entry name" value="CHLOROPLAST PROTEIN-TRANSPORTING ATPASE"/>
    <property type="match status" value="1"/>
</dbReference>
<dbReference type="PANTHER" id="PTHR30612">
    <property type="entry name" value="SECA INNER MEMBRANE COMPONENT OF SEC PROTEIN SECRETION SYSTEM"/>
    <property type="match status" value="1"/>
</dbReference>
<dbReference type="Pfam" id="PF21090">
    <property type="entry name" value="P-loop_SecA"/>
    <property type="match status" value="1"/>
</dbReference>
<dbReference type="Pfam" id="PF02810">
    <property type="entry name" value="SEC-C"/>
    <property type="match status" value="1"/>
</dbReference>
<dbReference type="Pfam" id="PF07517">
    <property type="entry name" value="SecA_DEAD"/>
    <property type="match status" value="1"/>
</dbReference>
<dbReference type="Pfam" id="PF01043">
    <property type="entry name" value="SecA_PP_bind"/>
    <property type="match status" value="1"/>
</dbReference>
<dbReference type="Pfam" id="PF07516">
    <property type="entry name" value="SecA_SW"/>
    <property type="match status" value="1"/>
</dbReference>
<dbReference type="PRINTS" id="PR00906">
    <property type="entry name" value="SECA"/>
</dbReference>
<dbReference type="SMART" id="SM00957">
    <property type="entry name" value="SecA_DEAD"/>
    <property type="match status" value="1"/>
</dbReference>
<dbReference type="SMART" id="SM00958">
    <property type="entry name" value="SecA_PP_bind"/>
    <property type="match status" value="1"/>
</dbReference>
<dbReference type="SUPFAM" id="SSF81886">
    <property type="entry name" value="Helical scaffold and wing domains of SecA"/>
    <property type="match status" value="1"/>
</dbReference>
<dbReference type="SUPFAM" id="SSF52540">
    <property type="entry name" value="P-loop containing nucleoside triphosphate hydrolases"/>
    <property type="match status" value="2"/>
</dbReference>
<dbReference type="SUPFAM" id="SSF81767">
    <property type="entry name" value="Pre-protein crosslinking domain of SecA"/>
    <property type="match status" value="1"/>
</dbReference>
<dbReference type="PROSITE" id="PS01312">
    <property type="entry name" value="SECA"/>
    <property type="match status" value="1"/>
</dbReference>
<dbReference type="PROSITE" id="PS51196">
    <property type="entry name" value="SECA_MOTOR_DEAD"/>
    <property type="match status" value="1"/>
</dbReference>
<reference key="1">
    <citation type="submission" date="2007-03" db="EMBL/GenBank/DDBJ databases">
        <title>Complete sequence of chromosome 1 of Burkholderia vietnamiensis G4.</title>
        <authorList>
            <consortium name="US DOE Joint Genome Institute"/>
            <person name="Copeland A."/>
            <person name="Lucas S."/>
            <person name="Lapidus A."/>
            <person name="Barry K."/>
            <person name="Detter J.C."/>
            <person name="Glavina del Rio T."/>
            <person name="Hammon N."/>
            <person name="Israni S."/>
            <person name="Dalin E."/>
            <person name="Tice H."/>
            <person name="Pitluck S."/>
            <person name="Chain P."/>
            <person name="Malfatti S."/>
            <person name="Shin M."/>
            <person name="Vergez L."/>
            <person name="Schmutz J."/>
            <person name="Larimer F."/>
            <person name="Land M."/>
            <person name="Hauser L."/>
            <person name="Kyrpides N."/>
            <person name="Tiedje J."/>
            <person name="Richardson P."/>
        </authorList>
    </citation>
    <scope>NUCLEOTIDE SEQUENCE [LARGE SCALE GENOMIC DNA]</scope>
    <source>
        <strain>G4 / LMG 22486</strain>
    </source>
</reference>
<keyword id="KW-0067">ATP-binding</keyword>
<keyword id="KW-0997">Cell inner membrane</keyword>
<keyword id="KW-1003">Cell membrane</keyword>
<keyword id="KW-0963">Cytoplasm</keyword>
<keyword id="KW-0472">Membrane</keyword>
<keyword id="KW-0479">Metal-binding</keyword>
<keyword id="KW-0547">Nucleotide-binding</keyword>
<keyword id="KW-0653">Protein transport</keyword>
<keyword id="KW-1278">Translocase</keyword>
<keyword id="KW-0811">Translocation</keyword>
<keyword id="KW-0813">Transport</keyword>
<keyword id="KW-0862">Zinc</keyword>
<gene>
    <name evidence="1" type="primary">secA</name>
    <name type="ordered locus">Bcep1808_0544</name>
</gene>
<accession>A4JBA3</accession>
<name>SECA_BURVG</name>